<keyword id="KW-0004">4Fe-4S</keyword>
<keyword id="KW-0150">Chloroplast</keyword>
<keyword id="KW-0903">Direct protein sequencing</keyword>
<keyword id="KW-0238">DNA-binding</keyword>
<keyword id="KW-0349">Heme</keyword>
<keyword id="KW-0408">Iron</keyword>
<keyword id="KW-0411">Iron-sulfur</keyword>
<keyword id="KW-0479">Metal-binding</keyword>
<keyword id="KW-0560">Oxidoreductase</keyword>
<keyword id="KW-0934">Plastid</keyword>
<keyword id="KW-1185">Reference proteome</keyword>
<keyword id="KW-0883">Thioether bond</keyword>
<keyword id="KW-0809">Transit peptide</keyword>
<name>SIR1_TOBAC</name>
<accession>O82802</accession>
<dbReference type="EC" id="1.8.7.1"/>
<dbReference type="EMBL" id="D83583">
    <property type="protein sequence ID" value="BAA33531.1"/>
    <property type="molecule type" value="mRNA"/>
</dbReference>
<dbReference type="EMBL" id="AB010717">
    <property type="protein sequence ID" value="BAA33796.1"/>
    <property type="molecule type" value="Genomic_DNA"/>
</dbReference>
<dbReference type="PIR" id="JE0260">
    <property type="entry name" value="JE0260"/>
</dbReference>
<dbReference type="RefSeq" id="NP_001312233.1">
    <property type="nucleotide sequence ID" value="NM_001325304.1"/>
</dbReference>
<dbReference type="SMR" id="O82802"/>
<dbReference type="STRING" id="4097.O82802"/>
<dbReference type="PaxDb" id="4097-O82802"/>
<dbReference type="GeneID" id="107780886"/>
<dbReference type="KEGG" id="nta:107780886"/>
<dbReference type="OrthoDB" id="1688044at2759"/>
<dbReference type="Proteomes" id="UP000084051">
    <property type="component" value="Unplaced"/>
</dbReference>
<dbReference type="GO" id="GO:0042644">
    <property type="term" value="C:chloroplast nucleoid"/>
    <property type="evidence" value="ECO:0000250"/>
    <property type="project" value="UniProtKB"/>
</dbReference>
<dbReference type="GO" id="GO:0009570">
    <property type="term" value="C:chloroplast stroma"/>
    <property type="evidence" value="ECO:0000250"/>
    <property type="project" value="UniProtKB"/>
</dbReference>
<dbReference type="GO" id="GO:0051539">
    <property type="term" value="F:4 iron, 4 sulfur cluster binding"/>
    <property type="evidence" value="ECO:0007669"/>
    <property type="project" value="UniProtKB-KW"/>
</dbReference>
<dbReference type="GO" id="GO:0003677">
    <property type="term" value="F:DNA binding"/>
    <property type="evidence" value="ECO:0000250"/>
    <property type="project" value="UniProtKB"/>
</dbReference>
<dbReference type="GO" id="GO:0020037">
    <property type="term" value="F:heme binding"/>
    <property type="evidence" value="ECO:0007669"/>
    <property type="project" value="InterPro"/>
</dbReference>
<dbReference type="GO" id="GO:0046872">
    <property type="term" value="F:metal ion binding"/>
    <property type="evidence" value="ECO:0007669"/>
    <property type="project" value="UniProtKB-KW"/>
</dbReference>
<dbReference type="GO" id="GO:0050311">
    <property type="term" value="F:sulfite reductase (ferredoxin) activity"/>
    <property type="evidence" value="ECO:0000250"/>
    <property type="project" value="UniProtKB"/>
</dbReference>
<dbReference type="GO" id="GO:0045892">
    <property type="term" value="P:negative regulation of DNA-templated transcription"/>
    <property type="evidence" value="ECO:0000250"/>
    <property type="project" value="UniProtKB"/>
</dbReference>
<dbReference type="GO" id="GO:0000103">
    <property type="term" value="P:sulfate assimilation"/>
    <property type="evidence" value="ECO:0000318"/>
    <property type="project" value="GO_Central"/>
</dbReference>
<dbReference type="GO" id="GO:0019418">
    <property type="term" value="P:sulfide oxidation"/>
    <property type="evidence" value="ECO:0000250"/>
    <property type="project" value="UniProtKB"/>
</dbReference>
<dbReference type="FunFam" id="3.30.413.10:FF:000008">
    <property type="entry name" value="Sulfite reductase [ferredoxin], chloroplastic"/>
    <property type="match status" value="1"/>
</dbReference>
<dbReference type="FunFam" id="3.30.413.10:FF:000014">
    <property type="entry name" value="Sulfite reductase [ferredoxin], chloroplastic"/>
    <property type="match status" value="1"/>
</dbReference>
<dbReference type="FunFam" id="3.90.480.10:FF:000001">
    <property type="entry name" value="Sulfite reductase [ferredoxin], chloroplastic"/>
    <property type="match status" value="1"/>
</dbReference>
<dbReference type="Gene3D" id="3.30.413.10">
    <property type="entry name" value="Sulfite Reductase Hemoprotein, domain 1"/>
    <property type="match status" value="2"/>
</dbReference>
<dbReference type="Gene3D" id="3.90.480.10">
    <property type="entry name" value="Sulfite Reductase Hemoprotein,Domain 2"/>
    <property type="match status" value="1"/>
</dbReference>
<dbReference type="InterPro" id="IPR005117">
    <property type="entry name" value="NiRdtase/SiRdtase_haem-b_fer"/>
</dbReference>
<dbReference type="InterPro" id="IPR036136">
    <property type="entry name" value="Nit/Sulf_reduc_fer-like_dom_sf"/>
</dbReference>
<dbReference type="InterPro" id="IPR006067">
    <property type="entry name" value="NO2/SO3_Rdtase_4Fe4S_dom"/>
</dbReference>
<dbReference type="InterPro" id="IPR045169">
    <property type="entry name" value="NO2/SO3_Rdtase_4Fe4S_prot"/>
</dbReference>
<dbReference type="InterPro" id="IPR045854">
    <property type="entry name" value="NO2/SO3_Rdtase_4Fe4S_sf"/>
</dbReference>
<dbReference type="InterPro" id="IPR006066">
    <property type="entry name" value="NO2/SO3_Rdtase_FeS/sirohaem_BS"/>
</dbReference>
<dbReference type="InterPro" id="IPR011787">
    <property type="entry name" value="SiR_ferredoxin-dep"/>
</dbReference>
<dbReference type="NCBIfam" id="NF010029">
    <property type="entry name" value="PRK13504.1"/>
    <property type="match status" value="1"/>
</dbReference>
<dbReference type="NCBIfam" id="TIGR02042">
    <property type="entry name" value="sir"/>
    <property type="match status" value="1"/>
</dbReference>
<dbReference type="PANTHER" id="PTHR11493:SF47">
    <property type="entry name" value="SULFITE REDUCTASE [NADPH] SUBUNIT BETA"/>
    <property type="match status" value="1"/>
</dbReference>
<dbReference type="PANTHER" id="PTHR11493">
    <property type="entry name" value="SULFITE REDUCTASE [NADPH] SUBUNIT BETA-RELATED"/>
    <property type="match status" value="1"/>
</dbReference>
<dbReference type="Pfam" id="PF01077">
    <property type="entry name" value="NIR_SIR"/>
    <property type="match status" value="2"/>
</dbReference>
<dbReference type="Pfam" id="PF03460">
    <property type="entry name" value="NIR_SIR_ferr"/>
    <property type="match status" value="2"/>
</dbReference>
<dbReference type="PRINTS" id="PR00397">
    <property type="entry name" value="SIROHAEM"/>
</dbReference>
<dbReference type="SUPFAM" id="SSF56014">
    <property type="entry name" value="Nitrite and sulphite reductase 4Fe-4S domain-like"/>
    <property type="match status" value="2"/>
</dbReference>
<dbReference type="SUPFAM" id="SSF55124">
    <property type="entry name" value="Nitrite/Sulfite reductase N-terminal domain-like"/>
    <property type="match status" value="2"/>
</dbReference>
<dbReference type="PROSITE" id="PS00365">
    <property type="entry name" value="NIR_SIR"/>
    <property type="match status" value="1"/>
</dbReference>
<comment type="function">
    <text evidence="2">Essential protein with sulfite reductase activity required in assimilatory sulfate reduction pathway during both primary and secondary metabolism and thus involved in development and growth.</text>
</comment>
<comment type="function">
    <text evidence="2">DNA-binding protein that binds to both double-stranded and single-stranded DNA without significant sequence specificity to reversibly repress the transcriptional activity of chloroplast nucleoids by promoting DNA compaction and possibly regulate DNA replication.</text>
</comment>
<comment type="catalytic activity">
    <reaction evidence="2">
        <text>hydrogen sulfide + 6 oxidized [2Fe-2S]-[ferredoxin] + 3 H2O = sulfite + 6 reduced [2Fe-2S]-[ferredoxin] + 7 H(+)</text>
        <dbReference type="Rhea" id="RHEA:23132"/>
        <dbReference type="Rhea" id="RHEA-COMP:10000"/>
        <dbReference type="Rhea" id="RHEA-COMP:10001"/>
        <dbReference type="ChEBI" id="CHEBI:15377"/>
        <dbReference type="ChEBI" id="CHEBI:15378"/>
        <dbReference type="ChEBI" id="CHEBI:17359"/>
        <dbReference type="ChEBI" id="CHEBI:29919"/>
        <dbReference type="ChEBI" id="CHEBI:33737"/>
        <dbReference type="ChEBI" id="CHEBI:33738"/>
        <dbReference type="EC" id="1.8.7.1"/>
    </reaction>
</comment>
<comment type="cofactor">
    <cofactor evidence="1">
        <name>siroheme</name>
        <dbReference type="ChEBI" id="CHEBI:60052"/>
    </cofactor>
    <text evidence="1">Binds 1 siroheme per subunit.</text>
</comment>
<comment type="cofactor">
    <cofactor evidence="1">
        <name>[4Fe-4S] cluster</name>
        <dbReference type="ChEBI" id="CHEBI:49883"/>
    </cofactor>
    <text evidence="1">Binds 1 [4Fe-4S] cluster per subunit.</text>
</comment>
<comment type="subunit">
    <text evidence="1">Monomer. Interacts with ferredoxin (By similarity).</text>
</comment>
<comment type="subcellular location">
    <subcellularLocation>
        <location evidence="1">Plastid</location>
        <location evidence="1">Chloroplast stroma</location>
        <location evidence="1">Chloroplast nucleoid</location>
    </subcellularLocation>
    <subcellularLocation>
        <location evidence="1">Plastid</location>
        <location evidence="1">Chloroplast stroma</location>
    </subcellularLocation>
    <subcellularLocation>
        <location evidence="1">Plastid stroma</location>
    </subcellularLocation>
</comment>
<comment type="tissue specificity">
    <text evidence="3">Expressed in leaves, stems, roots and petals.</text>
</comment>
<comment type="PTM">
    <text evidence="1">Phosphorylated; this phosphorylation reduces DNA-binding.</text>
</comment>
<comment type="similarity">
    <text evidence="4">Belongs to the nitrite and sulfite reductase 4Fe-4S domain family.</text>
</comment>
<sequence length="693" mass="77963">MTTSFGAAINIAVADDPNPKLQIHNFSGLKSTSNSLLLSRRLHVFQSFSPSNPSSIVRAVSTPAKPAAVEPKRSKVEIFKEQSNFIRYPLNEEILNDAPNINEAATQLIKFHGSYMQYDRDERGGRSYSFMLRTKNPGGEVPNRLYLVMDDLADQFGIGTLRLTTRQTFQLHGVLKKNLKTVMSTIIKNMGSTLGACGDLNRNVLAPAAPFAKKDYMFAKQTADNIAALLTPQSGFYYDVWVDGEKVMTAEPPEVVKARNDNSHGTNFPDSPEPIYGTQFLPRKFKIAVTVPTDNSVDIFTNDIGVVVVSNEDGEPQGFNIYVGGGMGRTHRMETTFPRLAEPLGYVPKEDILYAVKAIVVTQRENGRRDDRRYSRLKYLLSSWGIEKFRSVTEQYYGKKFQPCRELPEWEFKSYLGWHEAGDGSLFCGLHVDNGRVKGAMKKALREVIEKYNLNVRLTPNQNIILCNIRQAWKRPITTVLAQGGLLQPRYVDPLNLTAMACPAFPLCPLAITEAERGIPDILKRVRAIFERVGLKYSESVVIRITGCPNGCARPYMAELGLVGDGPNSYQIWLGGTPNQTSLAKTFKDKLKVQDLEKVLEPLFFHWRRKRQSKESFGDFTNRMGFEKLGEFVEKWEGIPESSSRYNLKLFADRETYEAMDALASIQDKNAHQLAIEVVRNYVASQQNGKSMD</sequence>
<evidence type="ECO:0000250" key="1"/>
<evidence type="ECO:0000250" key="2">
    <source>
        <dbReference type="UniProtKB" id="Q75NZ0"/>
    </source>
</evidence>
<evidence type="ECO:0000269" key="3">
    <source>
    </source>
</evidence>
<evidence type="ECO:0000305" key="4"/>
<organism>
    <name type="scientific">Nicotiana tabacum</name>
    <name type="common">Common tobacco</name>
    <dbReference type="NCBI Taxonomy" id="4097"/>
    <lineage>
        <taxon>Eukaryota</taxon>
        <taxon>Viridiplantae</taxon>
        <taxon>Streptophyta</taxon>
        <taxon>Embryophyta</taxon>
        <taxon>Tracheophyta</taxon>
        <taxon>Spermatophyta</taxon>
        <taxon>Magnoliopsida</taxon>
        <taxon>eudicotyledons</taxon>
        <taxon>Gunneridae</taxon>
        <taxon>Pentapetalae</taxon>
        <taxon>asterids</taxon>
        <taxon>lamiids</taxon>
        <taxon>Solanales</taxon>
        <taxon>Solanaceae</taxon>
        <taxon>Nicotianoideae</taxon>
        <taxon>Nicotianeae</taxon>
        <taxon>Nicotiana</taxon>
    </lineage>
</organism>
<feature type="transit peptide" description="Chloroplast" evidence="3">
    <location>
        <begin position="1"/>
        <end position="62"/>
    </location>
</feature>
<feature type="chain" id="PRO_0000416845" description="Sulfite reductase 1 [ferredoxin], chloroplastic">
    <location>
        <begin position="63"/>
        <end position="693"/>
    </location>
</feature>
<feature type="binding site" evidence="1">
    <location>
        <position position="502"/>
    </location>
    <ligand>
        <name>[4Fe-4S] cluster</name>
        <dbReference type="ChEBI" id="CHEBI:49883"/>
    </ligand>
</feature>
<feature type="binding site" evidence="1">
    <location>
        <position position="508"/>
    </location>
    <ligand>
        <name>[4Fe-4S] cluster</name>
        <dbReference type="ChEBI" id="CHEBI:49883"/>
    </ligand>
</feature>
<feature type="binding site" evidence="1">
    <location>
        <position position="548"/>
    </location>
    <ligand>
        <name>[4Fe-4S] cluster</name>
        <dbReference type="ChEBI" id="CHEBI:49883"/>
    </ligand>
</feature>
<feature type="binding site" evidence="1">
    <location>
        <position position="552"/>
    </location>
    <ligand>
        <name>[4Fe-4S] cluster</name>
        <dbReference type="ChEBI" id="CHEBI:49883"/>
    </ligand>
</feature>
<feature type="binding site" description="axial binding residue" evidence="1">
    <location>
        <position position="552"/>
    </location>
    <ligand>
        <name>siroheme</name>
        <dbReference type="ChEBI" id="CHEBI:60052"/>
    </ligand>
    <ligandPart>
        <name>Fe</name>
        <dbReference type="ChEBI" id="CHEBI:18248"/>
    </ligandPart>
</feature>
<protein>
    <recommendedName>
        <fullName>Sulfite reductase 1 [ferredoxin], chloroplastic</fullName>
        <shortName>NtSiR1</shortName>
        <ecNumber>1.8.7.1</ecNumber>
    </recommendedName>
</protein>
<gene>
    <name type="primary">SIR1</name>
</gene>
<proteinExistence type="evidence at protein level"/>
<reference key="1">
    <citation type="journal article" date="1998" name="J. Biochem.">
        <title>Molecular characterization of tobacco sulfite reductase: enzyme purification, gene cloning, and gene expression analysis.</title>
        <authorList>
            <person name="Yonekura-Sakakibara K."/>
            <person name="Ashikari T."/>
            <person name="Tanaka Y."/>
            <person name="Kusumi T."/>
            <person name="Hase T."/>
        </authorList>
    </citation>
    <scope>NUCLEOTIDE SEQUENCE [GENOMIC DNA / MRNA]</scope>
    <scope>PROTEIN SEQUENCE OF 63-72</scope>
    <scope>TISSUE SPECIFICITY</scope>
    <source>
        <strain>cv. SR1</strain>
        <tissue>Leaf</tissue>
    </source>
</reference>